<organism>
    <name type="scientific">Bos taurus</name>
    <name type="common">Bovine</name>
    <dbReference type="NCBI Taxonomy" id="9913"/>
    <lineage>
        <taxon>Eukaryota</taxon>
        <taxon>Metazoa</taxon>
        <taxon>Chordata</taxon>
        <taxon>Craniata</taxon>
        <taxon>Vertebrata</taxon>
        <taxon>Euteleostomi</taxon>
        <taxon>Mammalia</taxon>
        <taxon>Eutheria</taxon>
        <taxon>Laurasiatheria</taxon>
        <taxon>Artiodactyla</taxon>
        <taxon>Ruminantia</taxon>
        <taxon>Pecora</taxon>
        <taxon>Bovidae</taxon>
        <taxon>Bovinae</taxon>
        <taxon>Bos</taxon>
    </lineage>
</organism>
<comment type="function">
    <text evidence="1 2">As part of the Ragulator complex it is involved in amino acid sensing and activation of mTORC1, a signaling complex promoting cell growth in response to growth factors, energy levels, and amino acids. Activated by amino acids through a mechanism involving the lysosomal V-ATPase, the Ragulator plays a dual role for the small GTPases Rag (RagA/RRAGA, RagB/RRAGB, RagC/RRAGC and/or RagD/RRAGD): it (1) acts as a guanine nucleotide exchange factor (GEF), activating the small GTPases Rag and (2) mediates recruitment of Rag GTPases to the lysosome membrane. Activated Ragulator and Rag GTPases function as a scaffold recruiting mTORC1 to lysosomes where it is in turn activated (By similarity). Adapter protein that enhances the efficiency of the MAP kinase cascade facilitating the activation of MAPK2 (By similarity).</text>
</comment>
<comment type="subunit">
    <text evidence="1 2">Part of the Ragulator complex composed of LAMTOR1, LAMTOR2, LAMTOR3, LAMTOR4 and LAMTOR5. LAMTOR4 and LAMTOR5 form a heterodimer that interacts, through LAMTOR1, with a LAMTOR2, LAMTOR3 heterodimer. Interacts with LAMTOR1 and LAMTOR2; the interaction is direct. The Ragulator complex interacts with both the mTORC1 complex and heterodimers constituted of the Rag GTPases RagA/RRAGA, RagB/RRAGB, RagC/RRAGC and RagD/RRAGD; regulated by amino acid availability. The Ragulator complex interacts with SLC38A9; the probable amino acid sensor. Component of the lysosomal folliculin complex (LFC), composed of FLCN, FNIP1 (or FNIP2), RagA/RRAGA or RagB/RRAGB GDP-bound, RagC/RRAGC or RagD/RRAGD GTP-bound, and Ragulator (By similarity). Interacts with MAP2K1/MEK1 and MAPK2 (By similarity). Interacts with MORG1 (By similarity).</text>
</comment>
<comment type="subcellular location">
    <subcellularLocation>
        <location evidence="1">Late endosome membrane</location>
        <topology evidence="1">Peripheral membrane protein</topology>
        <orientation evidence="1">Cytoplasmic side</orientation>
    </subcellularLocation>
    <text evidence="1">Recruited to lysosome and endosome membranes by LAMTOR1.</text>
</comment>
<comment type="similarity">
    <text evidence="3">Belongs to the LAMTOR3 family.</text>
</comment>
<dbReference type="EMBL" id="BC118239">
    <property type="protein sequence ID" value="AAI18240.1"/>
    <property type="molecule type" value="mRNA"/>
</dbReference>
<dbReference type="RefSeq" id="NP_001069450.1">
    <property type="nucleotide sequence ID" value="NM_001075982.1"/>
</dbReference>
<dbReference type="SMR" id="Q17QQ1"/>
<dbReference type="FunCoup" id="Q17QQ1">
    <property type="interactions" value="2953"/>
</dbReference>
<dbReference type="STRING" id="9913.ENSBTAP00000044998"/>
<dbReference type="PaxDb" id="9913-ENSBTAP00000044998"/>
<dbReference type="Ensembl" id="ENSBTAT00000047833.2">
    <property type="protein sequence ID" value="ENSBTAP00000044998.1"/>
    <property type="gene ID" value="ENSBTAG00000007923.6"/>
</dbReference>
<dbReference type="GeneID" id="533155"/>
<dbReference type="KEGG" id="bta:533155"/>
<dbReference type="CTD" id="8649"/>
<dbReference type="VEuPathDB" id="HostDB:ENSBTAG00000007923"/>
<dbReference type="VGNC" id="VGNC:30781">
    <property type="gene designation" value="LAMTOR3"/>
</dbReference>
<dbReference type="eggNOG" id="ENOG502RYGZ">
    <property type="taxonomic scope" value="Eukaryota"/>
</dbReference>
<dbReference type="GeneTree" id="ENSGT00390000013159"/>
<dbReference type="HOGENOM" id="CLU_134641_0_0_1"/>
<dbReference type="InParanoid" id="Q17QQ1"/>
<dbReference type="OMA" id="YQVIQMN"/>
<dbReference type="OrthoDB" id="343907at2759"/>
<dbReference type="TreeFam" id="TF324889"/>
<dbReference type="Reactome" id="R-BTA-1632852">
    <property type="pathway name" value="Macroautophagy"/>
</dbReference>
<dbReference type="Reactome" id="R-BTA-165159">
    <property type="pathway name" value="MTOR signalling"/>
</dbReference>
<dbReference type="Reactome" id="R-BTA-166208">
    <property type="pathway name" value="mTORC1-mediated signalling"/>
</dbReference>
<dbReference type="Reactome" id="R-BTA-380972">
    <property type="pathway name" value="Energy dependent regulation of mTOR by LKB1-AMPK"/>
</dbReference>
<dbReference type="Reactome" id="R-BTA-5628897">
    <property type="pathway name" value="TP53 Regulates Metabolic Genes"/>
</dbReference>
<dbReference type="Reactome" id="R-BTA-5674135">
    <property type="pathway name" value="MAP2K and MAPK activation"/>
</dbReference>
<dbReference type="Reactome" id="R-BTA-6798695">
    <property type="pathway name" value="Neutrophil degranulation"/>
</dbReference>
<dbReference type="Reactome" id="R-BTA-8943724">
    <property type="pathway name" value="Regulation of PTEN gene transcription"/>
</dbReference>
<dbReference type="Reactome" id="R-BTA-9639288">
    <property type="pathway name" value="Amino acids regulate mTORC1"/>
</dbReference>
<dbReference type="Proteomes" id="UP000009136">
    <property type="component" value="Chromosome 6"/>
</dbReference>
<dbReference type="Bgee" id="ENSBTAG00000007923">
    <property type="expression patterns" value="Expressed in oocyte and 104 other cell types or tissues"/>
</dbReference>
<dbReference type="GO" id="GO:0031902">
    <property type="term" value="C:late endosome membrane"/>
    <property type="evidence" value="ECO:0007669"/>
    <property type="project" value="UniProtKB-SubCell"/>
</dbReference>
<dbReference type="GO" id="GO:0005765">
    <property type="term" value="C:lysosomal membrane"/>
    <property type="evidence" value="ECO:0000250"/>
    <property type="project" value="UniProtKB"/>
</dbReference>
<dbReference type="GO" id="GO:0071986">
    <property type="term" value="C:Ragulator complex"/>
    <property type="evidence" value="ECO:0000250"/>
    <property type="project" value="UniProtKB"/>
</dbReference>
<dbReference type="GO" id="GO:0071230">
    <property type="term" value="P:cellular response to amino acid stimulus"/>
    <property type="evidence" value="ECO:0000250"/>
    <property type="project" value="UniProtKB"/>
</dbReference>
<dbReference type="GO" id="GO:0032008">
    <property type="term" value="P:positive regulation of TOR signaling"/>
    <property type="evidence" value="ECO:0000250"/>
    <property type="project" value="UniProtKB"/>
</dbReference>
<dbReference type="GO" id="GO:1904263">
    <property type="term" value="P:positive regulation of TORC1 signaling"/>
    <property type="evidence" value="ECO:0000250"/>
    <property type="project" value="UniProtKB"/>
</dbReference>
<dbReference type="GO" id="GO:0008104">
    <property type="term" value="P:protein localization"/>
    <property type="evidence" value="ECO:0000250"/>
    <property type="project" value="UniProtKB"/>
</dbReference>
<dbReference type="FunFam" id="3.30.450.30:FF:000003">
    <property type="entry name" value="ragulator complex protein LAMTOR3 homolog"/>
    <property type="match status" value="1"/>
</dbReference>
<dbReference type="Gene3D" id="3.30.450.30">
    <property type="entry name" value="Dynein light chain 2a, cytoplasmic"/>
    <property type="match status" value="1"/>
</dbReference>
<dbReference type="InterPro" id="IPR015019">
    <property type="entry name" value="LAMTOR3"/>
</dbReference>
<dbReference type="PANTHER" id="PTHR13378:SF1">
    <property type="entry name" value="RAGULATOR COMPLEX PROTEIN LAMTOR3"/>
    <property type="match status" value="1"/>
</dbReference>
<dbReference type="PANTHER" id="PTHR13378">
    <property type="entry name" value="REGULATOR COMPLEX PROTEIN LAMTOR3"/>
    <property type="match status" value="1"/>
</dbReference>
<dbReference type="Pfam" id="PF08923">
    <property type="entry name" value="MAPKK1_Int"/>
    <property type="match status" value="1"/>
</dbReference>
<dbReference type="SMART" id="SM01278">
    <property type="entry name" value="MAPKK1_Int"/>
    <property type="match status" value="1"/>
</dbReference>
<dbReference type="SUPFAM" id="SSF103196">
    <property type="entry name" value="Roadblock/LC7 domain"/>
    <property type="match status" value="1"/>
</dbReference>
<name>LTOR3_BOVIN</name>
<proteinExistence type="evidence at transcript level"/>
<keyword id="KW-0967">Endosome</keyword>
<keyword id="KW-0472">Membrane</keyword>
<keyword id="KW-1185">Reference proteome</keyword>
<evidence type="ECO:0000250" key="1">
    <source>
        <dbReference type="UniProtKB" id="O88653"/>
    </source>
</evidence>
<evidence type="ECO:0000250" key="2">
    <source>
        <dbReference type="UniProtKB" id="Q9UHA4"/>
    </source>
</evidence>
<evidence type="ECO:0000305" key="3"/>
<sequence>MADDLKRFLYKKLPSVEGLHAIVVSDRDGVPVIKVANDNAPEHALRPGFLSTFALATDQGSKLGLSKNKSIICYYNTYQVVQFNRLPLVVSFIASSNANTGLIVSLEKELAPLFEELRQVVEVS</sequence>
<feature type="chain" id="PRO_0000356160" description="Ragulator complex protein LAMTOR3">
    <location>
        <begin position="1"/>
        <end position="124"/>
    </location>
</feature>
<reference key="1">
    <citation type="submission" date="2006-06" db="EMBL/GenBank/DDBJ databases">
        <authorList>
            <consortium name="NIH - Mammalian Gene Collection (MGC) project"/>
        </authorList>
    </citation>
    <scope>NUCLEOTIDE SEQUENCE [LARGE SCALE MRNA]</scope>
    <source>
        <strain>Hereford</strain>
        <tissue>Basal ganglia</tissue>
    </source>
</reference>
<accession>Q17QQ1</accession>
<protein>
    <recommendedName>
        <fullName>Ragulator complex protein LAMTOR3</fullName>
    </recommendedName>
    <alternativeName>
        <fullName>Late endosomal/lysosomal adaptor and MAPK and MTOR activator 3</fullName>
    </alternativeName>
</protein>
<gene>
    <name type="primary">LAMTOR3</name>
</gene>